<comment type="function">
    <text evidence="4 5 7 8">Transfers an acyl-group from acyl-ACP to the sn-1 position of glycerol-3-phosphate producing a lysophosphatidic acid (LPA), an essential step for the triacylglycerol (TAG) and glycerophospholipids (PubMed:17013544, PubMed:17689486, PubMed:22905194). In vitro also transfers an acyl-group from acyl-ACP to the LPA producing a phosphatidic acid (PA) (PubMed:22905194). Prefers arachidonoyl-CoA as the acyl donor (PubMed:22905194). Required for primary processing step during piRNA biosynthesis (PubMed:23611983). Molecular mechanisms by which it promotes piRNA biosynthesis are unclear and do not involve its acyltransferase activity (PubMed:23611983).</text>
</comment>
<comment type="catalytic activity">
    <reaction evidence="7 14 15">
        <text>sn-glycerol 3-phosphate + an acyl-CoA = a 1-acyl-sn-glycero-3-phosphate + CoA</text>
        <dbReference type="Rhea" id="RHEA:15325"/>
        <dbReference type="ChEBI" id="CHEBI:57287"/>
        <dbReference type="ChEBI" id="CHEBI:57597"/>
        <dbReference type="ChEBI" id="CHEBI:57970"/>
        <dbReference type="ChEBI" id="CHEBI:58342"/>
        <dbReference type="EC" id="2.3.1.15"/>
    </reaction>
    <physiologicalReaction direction="left-to-right" evidence="7">
        <dbReference type="Rhea" id="RHEA:15326"/>
    </physiologicalReaction>
</comment>
<comment type="catalytic activity">
    <reaction evidence="7">
        <text>a 1-acyl-sn-glycero-3-phosphate + an acyl-CoA = a 1,2-diacyl-sn-glycero-3-phosphate + CoA</text>
        <dbReference type="Rhea" id="RHEA:19709"/>
        <dbReference type="ChEBI" id="CHEBI:57287"/>
        <dbReference type="ChEBI" id="CHEBI:57970"/>
        <dbReference type="ChEBI" id="CHEBI:58342"/>
        <dbReference type="ChEBI" id="CHEBI:58608"/>
        <dbReference type="EC" id="2.3.1.51"/>
    </reaction>
    <physiologicalReaction direction="left-to-right" evidence="16">
        <dbReference type="Rhea" id="RHEA:19710"/>
    </physiologicalReaction>
</comment>
<comment type="catalytic activity">
    <reaction evidence="7">
        <text>1-(9Z-octadecenoyl)-sn-glycero-3-phosphate + (9Z)-octadecenoyl-CoA = 1,2-di-(9Z-octadecenoyl)-sn-glycero-3-phosphate + CoA</text>
        <dbReference type="Rhea" id="RHEA:37131"/>
        <dbReference type="ChEBI" id="CHEBI:57287"/>
        <dbReference type="ChEBI" id="CHEBI:57387"/>
        <dbReference type="ChEBI" id="CHEBI:74544"/>
        <dbReference type="ChEBI" id="CHEBI:74546"/>
    </reaction>
    <physiologicalReaction direction="left-to-right" evidence="16">
        <dbReference type="Rhea" id="RHEA:37132"/>
    </physiologicalReaction>
</comment>
<comment type="catalytic activity">
    <reaction evidence="7">
        <text>1-(9Z-octadecenoyl)-sn-glycero-3-phosphate + (5Z,8Z,11Z,14Z)-eicosatetraenoyl-CoA = 1-(9Z)-octadecenoyl-2-(5Z,8Z,11Z,14Z)-eicosatetraenoyl-sn-glycero-3-phosphate + CoA</text>
        <dbReference type="Rhea" id="RHEA:37443"/>
        <dbReference type="ChEBI" id="CHEBI:57287"/>
        <dbReference type="ChEBI" id="CHEBI:57368"/>
        <dbReference type="ChEBI" id="CHEBI:74544"/>
        <dbReference type="ChEBI" id="CHEBI:74928"/>
    </reaction>
    <physiologicalReaction direction="left-to-right" evidence="16">
        <dbReference type="Rhea" id="RHEA:37444"/>
    </physiologicalReaction>
</comment>
<comment type="catalytic activity">
    <reaction evidence="7">
        <text>(5Z,8Z,11Z,14Z)-eicosatetraenoyl-CoA + sn-glycerol 3-phosphate = 1-(5Z,8Z,11Z,14Z-eicosatetraenoyl)-sn-glycero-3-phosphate + CoA</text>
        <dbReference type="Rhea" id="RHEA:37463"/>
        <dbReference type="ChEBI" id="CHEBI:57287"/>
        <dbReference type="ChEBI" id="CHEBI:57368"/>
        <dbReference type="ChEBI" id="CHEBI:57597"/>
        <dbReference type="ChEBI" id="CHEBI:74938"/>
    </reaction>
    <physiologicalReaction direction="left-to-right" evidence="7">
        <dbReference type="Rhea" id="RHEA:37464"/>
    </physiologicalReaction>
</comment>
<comment type="activity regulation">
    <text evidence="5">Inhibited by N-ethylmaleimide (NEM).</text>
</comment>
<comment type="pathway">
    <text evidence="7">Phospholipid metabolism; CDP-diacylglycerol biosynthesis; CDP-diacylglycerol from sn-glycerol 3-phosphate: step 1/3.</text>
</comment>
<comment type="subunit">
    <text evidence="8">Interacts with PIWIL2 (PubMed:23611983).</text>
</comment>
<comment type="subcellular location">
    <subcellularLocation>
        <location evidence="4 5 6">Mitochondrion outer membrane</location>
        <topology evidence="4 5 6">Multi-pass membrane protein</topology>
    </subcellularLocation>
</comment>
<comment type="alternative products">
    <event type="alternative splicing"/>
    <isoform>
        <id>Q14DK4-1</id>
        <name>1</name>
        <sequence type="displayed"/>
    </isoform>
    <isoform>
        <id>Q14DK4-2</id>
        <name>2</name>
        <sequence type="described" ref="VSP_032457 VSP_032458"/>
    </isoform>
    <isoform>
        <id>Q14DK4-3</id>
        <name>3</name>
        <sequence type="described" ref="VSP_032457"/>
    </isoform>
</comment>
<comment type="tissue specificity">
    <text evidence="4 5 7 9">Highly expressed in the testis (PubMed:26268560). Expressed at lower levels in the heart, liver, kidney, spleen and adipose cells (PubMed:17013544, PubMed:17689486). Only detected in primary spermatocytes (PubMed:22905194).</text>
</comment>
<comment type="developmental stage">
    <text evidence="9">Highly expressed in pachytene spermatocytes (at protein level) (PubMed:26268560).</text>
</comment>
<comment type="induction">
    <text evidence="9">Up-regulated by retinoic acid (PubMed:26268560).</text>
</comment>
<comment type="domain">
    <text evidence="1">The HXXXXD motif is essential for acyltransferase activity and may constitute the binding site for the phosphate moiety of the glycerol-3-phosphate.</text>
</comment>
<comment type="similarity">
    <text evidence="13">Belongs to the GPAT/DAPAT family.</text>
</comment>
<comment type="sequence caution" evidence="13">
    <conflict type="erroneous initiation">
        <sequence resource="EMBL-CDS" id="AAI13777"/>
    </conflict>
</comment>
<comment type="sequence caution" evidence="13">
    <conflict type="erroneous initiation">
        <sequence resource="EMBL-CDS" id="BAD21404"/>
    </conflict>
</comment>
<organism>
    <name type="scientific">Mus musculus</name>
    <name type="common">Mouse</name>
    <dbReference type="NCBI Taxonomy" id="10090"/>
    <lineage>
        <taxon>Eukaryota</taxon>
        <taxon>Metazoa</taxon>
        <taxon>Chordata</taxon>
        <taxon>Craniata</taxon>
        <taxon>Vertebrata</taxon>
        <taxon>Euteleostomi</taxon>
        <taxon>Mammalia</taxon>
        <taxon>Eutheria</taxon>
        <taxon>Euarchontoglires</taxon>
        <taxon>Glires</taxon>
        <taxon>Rodentia</taxon>
        <taxon>Myomorpha</taxon>
        <taxon>Muroidea</taxon>
        <taxon>Muridae</taxon>
        <taxon>Murinae</taxon>
        <taxon>Mus</taxon>
        <taxon>Mus</taxon>
    </lineage>
</organism>
<evidence type="ECO:0000250" key="1"/>
<evidence type="ECO:0000255" key="2"/>
<evidence type="ECO:0000256" key="3">
    <source>
        <dbReference type="SAM" id="MobiDB-lite"/>
    </source>
</evidence>
<evidence type="ECO:0000269" key="4">
    <source>
    </source>
</evidence>
<evidence type="ECO:0000269" key="5">
    <source>
    </source>
</evidence>
<evidence type="ECO:0000269" key="6">
    <source>
    </source>
</evidence>
<evidence type="ECO:0000269" key="7">
    <source>
    </source>
</evidence>
<evidence type="ECO:0000269" key="8">
    <source>
    </source>
</evidence>
<evidence type="ECO:0000269" key="9">
    <source>
    </source>
</evidence>
<evidence type="ECO:0000303" key="10">
    <source>
    </source>
</evidence>
<evidence type="ECO:0000303" key="11">
    <source>
    </source>
</evidence>
<evidence type="ECO:0000303" key="12">
    <source>
    </source>
</evidence>
<evidence type="ECO:0000305" key="13"/>
<evidence type="ECO:0000305" key="14">
    <source>
    </source>
</evidence>
<evidence type="ECO:0000305" key="15">
    <source>
    </source>
</evidence>
<evidence type="ECO:0000305" key="16">
    <source>
    </source>
</evidence>
<evidence type="ECO:0000312" key="17">
    <source>
        <dbReference type="MGI" id="MGI:2684962"/>
    </source>
</evidence>
<evidence type="ECO:0007744" key="18">
    <source>
    </source>
</evidence>
<reference key="1">
    <citation type="journal article" date="2007" name="Arch. Biochem. Biophys.">
        <title>Cloning and functional characterization of a novel mitochondrial N-ethylmaleimide-sensitive glycerol-3-phosphate acyltransferase (GPAT2).</title>
        <authorList>
            <person name="Wang S."/>
            <person name="Lee D.P."/>
            <person name="Gong N."/>
            <person name="Schwerbrock N.M.J."/>
            <person name="Mashek D.G."/>
            <person name="Gonzalez-Baro M.R."/>
            <person name="Stapleton C."/>
            <person name="Li L.O."/>
            <person name="Lewin T.M."/>
            <person name="Coleman R.A."/>
        </authorList>
    </citation>
    <scope>NUCLEOTIDE SEQUENCE [MRNA] (ISOFORM 3)</scope>
    <scope>SUBCELLULAR LOCATION</scope>
    <scope>FUNCTION</scope>
    <scope>ACTIVITY REGULATION</scope>
    <scope>TISSUE SPECIFICITY</scope>
    <source>
        <tissue>Testis</tissue>
    </source>
</reference>
<reference key="2">
    <citation type="journal article" date="2007" name="Mol. Cell. Biochem.">
        <title>Molecular cloning of a murine glycerol-3-phosphate acyltransferase-like protein 1 (xGPAT1).</title>
        <authorList>
            <person name="Harada N."/>
            <person name="Hara S."/>
            <person name="Yoshida M."/>
            <person name="Zenitani T."/>
            <person name="Mawatari K."/>
            <person name="Nakano M."/>
            <person name="Takahashi A."/>
            <person name="Hosaka T."/>
            <person name="Yoshimoto K."/>
            <person name="Nakaya Y."/>
        </authorList>
    </citation>
    <scope>NUCLEOTIDE SEQUENCE [MRNA] (ISOFORM 1)</scope>
    <scope>SUBCELLULAR LOCATION</scope>
    <scope>FUNCTION</scope>
    <scope>TISSUE SPECIFICITY</scope>
    <source>
        <strain>C57BL/6J</strain>
        <tissue>Kidney</tissue>
    </source>
</reference>
<reference key="3">
    <citation type="journal article" date="2004" name="DNA Res.">
        <title>Prediction of the coding sequences of mouse homologues of FLJ genes: the complete nucleotide sequences of 110 mouse FLJ-homologous cDNAs identified by screening of terminal sequences of cDNA clones randomly sampled from size-fractionated libraries.</title>
        <authorList>
            <person name="Okazaki N."/>
            <person name="Kikuno R."/>
            <person name="Ohara R."/>
            <person name="Inamoto S."/>
            <person name="Koseki H."/>
            <person name="Hiraoka S."/>
            <person name="Saga Y."/>
            <person name="Kitamura H."/>
            <person name="Nakagawa T."/>
            <person name="Nagase T."/>
            <person name="Ohara O."/>
            <person name="Koga H."/>
        </authorList>
    </citation>
    <scope>NUCLEOTIDE SEQUENCE [LARGE SCALE MRNA] (ISOFORM 1)</scope>
    <source>
        <tissue>Embryonic tail</tissue>
    </source>
</reference>
<reference key="4">
    <citation type="journal article" date="2009" name="PLoS Biol.">
        <title>Lineage-specific biology revealed by a finished genome assembly of the mouse.</title>
        <authorList>
            <person name="Church D.M."/>
            <person name="Goodstadt L."/>
            <person name="Hillier L.W."/>
            <person name="Zody M.C."/>
            <person name="Goldstein S."/>
            <person name="She X."/>
            <person name="Bult C.J."/>
            <person name="Agarwala R."/>
            <person name="Cherry J.L."/>
            <person name="DiCuccio M."/>
            <person name="Hlavina W."/>
            <person name="Kapustin Y."/>
            <person name="Meric P."/>
            <person name="Maglott D."/>
            <person name="Birtle Z."/>
            <person name="Marques A.C."/>
            <person name="Graves T."/>
            <person name="Zhou S."/>
            <person name="Teague B."/>
            <person name="Potamousis K."/>
            <person name="Churas C."/>
            <person name="Place M."/>
            <person name="Herschleb J."/>
            <person name="Runnheim R."/>
            <person name="Forrest D."/>
            <person name="Amos-Landgraf J."/>
            <person name="Schwartz D.C."/>
            <person name="Cheng Z."/>
            <person name="Lindblad-Toh K."/>
            <person name="Eichler E.E."/>
            <person name="Ponting C.P."/>
        </authorList>
    </citation>
    <scope>NUCLEOTIDE SEQUENCE [LARGE SCALE GENOMIC DNA]</scope>
</reference>
<reference key="5">
    <citation type="journal article" date="2004" name="Genome Res.">
        <title>The status, quality, and expansion of the NIH full-length cDNA project: the Mammalian Gene Collection (MGC).</title>
        <authorList>
            <consortium name="The MGC Project Team"/>
        </authorList>
    </citation>
    <scope>NUCLEOTIDE SEQUENCE [LARGE SCALE MRNA] (ISOFORMS 2 AND 3)</scope>
</reference>
<reference key="6">
    <citation type="journal article" date="2005" name="Science">
        <title>The transcriptional landscape of the mammalian genome.</title>
        <authorList>
            <person name="Carninci P."/>
            <person name="Kasukawa T."/>
            <person name="Katayama S."/>
            <person name="Gough J."/>
            <person name="Frith M.C."/>
            <person name="Maeda N."/>
            <person name="Oyama R."/>
            <person name="Ravasi T."/>
            <person name="Lenhard B."/>
            <person name="Wells C."/>
            <person name="Kodzius R."/>
            <person name="Shimokawa K."/>
            <person name="Bajic V.B."/>
            <person name="Brenner S.E."/>
            <person name="Batalov S."/>
            <person name="Forrest A.R."/>
            <person name="Zavolan M."/>
            <person name="Davis M.J."/>
            <person name="Wilming L.G."/>
            <person name="Aidinis V."/>
            <person name="Allen J.E."/>
            <person name="Ambesi-Impiombato A."/>
            <person name="Apweiler R."/>
            <person name="Aturaliya R.N."/>
            <person name="Bailey T.L."/>
            <person name="Bansal M."/>
            <person name="Baxter L."/>
            <person name="Beisel K.W."/>
            <person name="Bersano T."/>
            <person name="Bono H."/>
            <person name="Chalk A.M."/>
            <person name="Chiu K.P."/>
            <person name="Choudhary V."/>
            <person name="Christoffels A."/>
            <person name="Clutterbuck D.R."/>
            <person name="Crowe M.L."/>
            <person name="Dalla E."/>
            <person name="Dalrymple B.P."/>
            <person name="de Bono B."/>
            <person name="Della Gatta G."/>
            <person name="di Bernardo D."/>
            <person name="Down T."/>
            <person name="Engstrom P."/>
            <person name="Fagiolini M."/>
            <person name="Faulkner G."/>
            <person name="Fletcher C.F."/>
            <person name="Fukushima T."/>
            <person name="Furuno M."/>
            <person name="Futaki S."/>
            <person name="Gariboldi M."/>
            <person name="Georgii-Hemming P."/>
            <person name="Gingeras T.R."/>
            <person name="Gojobori T."/>
            <person name="Green R.E."/>
            <person name="Gustincich S."/>
            <person name="Harbers M."/>
            <person name="Hayashi Y."/>
            <person name="Hensch T.K."/>
            <person name="Hirokawa N."/>
            <person name="Hill D."/>
            <person name="Huminiecki L."/>
            <person name="Iacono M."/>
            <person name="Ikeo K."/>
            <person name="Iwama A."/>
            <person name="Ishikawa T."/>
            <person name="Jakt M."/>
            <person name="Kanapin A."/>
            <person name="Katoh M."/>
            <person name="Kawasawa Y."/>
            <person name="Kelso J."/>
            <person name="Kitamura H."/>
            <person name="Kitano H."/>
            <person name="Kollias G."/>
            <person name="Krishnan S.P."/>
            <person name="Kruger A."/>
            <person name="Kummerfeld S.K."/>
            <person name="Kurochkin I.V."/>
            <person name="Lareau L.F."/>
            <person name="Lazarevic D."/>
            <person name="Lipovich L."/>
            <person name="Liu J."/>
            <person name="Liuni S."/>
            <person name="McWilliam S."/>
            <person name="Madan Babu M."/>
            <person name="Madera M."/>
            <person name="Marchionni L."/>
            <person name="Matsuda H."/>
            <person name="Matsuzawa S."/>
            <person name="Miki H."/>
            <person name="Mignone F."/>
            <person name="Miyake S."/>
            <person name="Morris K."/>
            <person name="Mottagui-Tabar S."/>
            <person name="Mulder N."/>
            <person name="Nakano N."/>
            <person name="Nakauchi H."/>
            <person name="Ng P."/>
            <person name="Nilsson R."/>
            <person name="Nishiguchi S."/>
            <person name="Nishikawa S."/>
            <person name="Nori F."/>
            <person name="Ohara O."/>
            <person name="Okazaki Y."/>
            <person name="Orlando V."/>
            <person name="Pang K.C."/>
            <person name="Pavan W.J."/>
            <person name="Pavesi G."/>
            <person name="Pesole G."/>
            <person name="Petrovsky N."/>
            <person name="Piazza S."/>
            <person name="Reed J."/>
            <person name="Reid J.F."/>
            <person name="Ring B.Z."/>
            <person name="Ringwald M."/>
            <person name="Rost B."/>
            <person name="Ruan Y."/>
            <person name="Salzberg S.L."/>
            <person name="Sandelin A."/>
            <person name="Schneider C."/>
            <person name="Schoenbach C."/>
            <person name="Sekiguchi K."/>
            <person name="Semple C.A."/>
            <person name="Seno S."/>
            <person name="Sessa L."/>
            <person name="Sheng Y."/>
            <person name="Shibata Y."/>
            <person name="Shimada H."/>
            <person name="Shimada K."/>
            <person name="Silva D."/>
            <person name="Sinclair B."/>
            <person name="Sperling S."/>
            <person name="Stupka E."/>
            <person name="Sugiura K."/>
            <person name="Sultana R."/>
            <person name="Takenaka Y."/>
            <person name="Taki K."/>
            <person name="Tammoja K."/>
            <person name="Tan S.L."/>
            <person name="Tang S."/>
            <person name="Taylor M.S."/>
            <person name="Tegner J."/>
            <person name="Teichmann S.A."/>
            <person name="Ueda H.R."/>
            <person name="van Nimwegen E."/>
            <person name="Verardo R."/>
            <person name="Wei C.L."/>
            <person name="Yagi K."/>
            <person name="Yamanishi H."/>
            <person name="Zabarovsky E."/>
            <person name="Zhu S."/>
            <person name="Zimmer A."/>
            <person name="Hide W."/>
            <person name="Bult C."/>
            <person name="Grimmond S.M."/>
            <person name="Teasdale R.D."/>
            <person name="Liu E.T."/>
            <person name="Brusic V."/>
            <person name="Quackenbush J."/>
            <person name="Wahlestedt C."/>
            <person name="Mattick J.S."/>
            <person name="Hume D.A."/>
            <person name="Kai C."/>
            <person name="Sasaki D."/>
            <person name="Tomaru Y."/>
            <person name="Fukuda S."/>
            <person name="Kanamori-Katayama M."/>
            <person name="Suzuki M."/>
            <person name="Aoki J."/>
            <person name="Arakawa T."/>
            <person name="Iida J."/>
            <person name="Imamura K."/>
            <person name="Itoh M."/>
            <person name="Kato T."/>
            <person name="Kawaji H."/>
            <person name="Kawagashira N."/>
            <person name="Kawashima T."/>
            <person name="Kojima M."/>
            <person name="Kondo S."/>
            <person name="Konno H."/>
            <person name="Nakano K."/>
            <person name="Ninomiya N."/>
            <person name="Nishio T."/>
            <person name="Okada M."/>
            <person name="Plessy C."/>
            <person name="Shibata K."/>
            <person name="Shiraki T."/>
            <person name="Suzuki S."/>
            <person name="Tagami M."/>
            <person name="Waki K."/>
            <person name="Watahiki A."/>
            <person name="Okamura-Oho Y."/>
            <person name="Suzuki H."/>
            <person name="Kawai J."/>
            <person name="Hayashizaki Y."/>
        </authorList>
    </citation>
    <scope>NUCLEOTIDE SEQUENCE [LARGE SCALE MRNA] OF 482-801</scope>
    <source>
        <strain>C57BL/6J</strain>
        <tissue>Aorta</tissue>
        <tissue>Vein</tissue>
    </source>
</reference>
<reference key="7">
    <citation type="journal article" date="2010" name="Cell">
        <title>A tissue-specific atlas of mouse protein phosphorylation and expression.</title>
        <authorList>
            <person name="Huttlin E.L."/>
            <person name="Jedrychowski M.P."/>
            <person name="Elias J.E."/>
            <person name="Goswami T."/>
            <person name="Rad R."/>
            <person name="Beausoleil S.A."/>
            <person name="Villen J."/>
            <person name="Haas W."/>
            <person name="Sowa M.E."/>
            <person name="Gygi S.P."/>
        </authorList>
    </citation>
    <scope>PHOSPHORYLATION [LARGE SCALE ANALYSIS] AT SER-662; THR-666; SER-668 AND SER-670</scope>
    <scope>IDENTIFICATION BY MASS SPECTROMETRY [LARGE SCALE ANALYSIS]</scope>
    <source>
        <tissue>Testis</tissue>
    </source>
</reference>
<reference key="8">
    <citation type="journal article" date="2012" name="Biochem. Biophys. Res. Commun.">
        <title>Membrane topology of murine glycerol-3-phosphate acyltransferase 2.</title>
        <authorList>
            <person name="Nakagawa T."/>
            <person name="Harada N."/>
            <person name="Miyamoto A."/>
            <person name="Kawanishi Y."/>
            <person name="Yoshida M."/>
            <person name="Shono M."/>
            <person name="Mawatari K."/>
            <person name="Takahashi A."/>
            <person name="Sakaue H."/>
            <person name="Nakaya Y."/>
        </authorList>
    </citation>
    <scope>SUBCELLULAR LOCATION</scope>
    <scope>MEMBRANE TOPOLOGY</scope>
</reference>
<reference key="9">
    <citation type="journal article" date="2012" name="PLoS ONE">
        <title>Glycerol-3-phosphate acyltransferase-2 is expressed in spermatic germ cells and incorporates arachidonic acid into triacylglycerols.</title>
        <authorList>
            <person name="Cattaneo E.R."/>
            <person name="Pellon-Maison M."/>
            <person name="Rabassa M.E."/>
            <person name="Lacunza E."/>
            <person name="Coleman R.A."/>
            <person name="Gonzalez-Baro M.R."/>
        </authorList>
    </citation>
    <scope>CATALYTIC ACTIVITY</scope>
    <scope>FUNCTION</scope>
    <scope>TISSUE SPECIFICITY</scope>
    <scope>PATHWAY</scope>
</reference>
<reference key="10">
    <citation type="journal article" date="2013" name="RNA">
        <title>GPAT2, a mitochondrial outer membrane protein, in piRNA biogenesis in germline stem cells.</title>
        <authorList>
            <person name="Shiromoto Y."/>
            <person name="Kuramochi-Miyagawa S."/>
            <person name="Daiba A."/>
            <person name="Chuma S."/>
            <person name="Katanaya A."/>
            <person name="Katsumata A."/>
            <person name="Nishimura K."/>
            <person name="Ohtaka M."/>
            <person name="Nakanishi M."/>
            <person name="Nakamura T."/>
            <person name="Yoshinaga K."/>
            <person name="Asada N."/>
            <person name="Nakamura S."/>
            <person name="Yasunaga T."/>
            <person name="Kojima-Kita K."/>
            <person name="Itou D."/>
            <person name="Kimura T."/>
            <person name="Nakano T."/>
        </authorList>
    </citation>
    <scope>FUNCTION</scope>
    <scope>INTERACTION WITH PIWIL2</scope>
    <scope>MUTAGENESIS OF HIS-205 AND ASP-210</scope>
</reference>
<reference key="11">
    <citation type="journal article" date="2015" name="Biochem. J.">
        <title>Methylation of the Gpat2 promoter regulates transient expression during mouse spermatogenesis.</title>
        <authorList>
            <person name="Garcia-Fabiani M.B."/>
            <person name="Montanaro M.A."/>
            <person name="Lacunza E."/>
            <person name="Cattaneo E.R."/>
            <person name="Coleman R.A."/>
            <person name="Pellon-Maison M."/>
            <person name="Gonzalez-Baro M.R."/>
        </authorList>
    </citation>
    <scope>TISSUE SPECIFICITY</scope>
    <scope>DEVELOPMENTAL STAGE</scope>
    <scope>INDUCTION</scope>
</reference>
<feature type="chain" id="PRO_0000325854" description="Glycerol-3-phosphate acyltransferase 2, mitochondrial">
    <location>
        <begin position="1"/>
        <end position="801"/>
    </location>
</feature>
<feature type="topological domain" description="Cytoplasmic" evidence="2">
    <location>
        <begin position="1"/>
        <end position="305"/>
    </location>
</feature>
<feature type="transmembrane region" description="Helical" evidence="2">
    <location>
        <begin position="306"/>
        <end position="332"/>
    </location>
</feature>
<feature type="topological domain" description="Mitochondrial intermembrane" evidence="2">
    <location>
        <begin position="333"/>
        <end position="449"/>
    </location>
</feature>
<feature type="transmembrane region" description="Helical" evidence="2">
    <location>
        <begin position="450"/>
        <end position="472"/>
    </location>
</feature>
<feature type="topological domain" description="Cytoplasmic" evidence="2">
    <location>
        <begin position="473"/>
        <end position="801"/>
    </location>
</feature>
<feature type="region of interest" description="Disordered" evidence="3">
    <location>
        <begin position="1"/>
        <end position="24"/>
    </location>
</feature>
<feature type="region of interest" description="Acyltransferase">
    <location>
        <begin position="180"/>
        <end position="290"/>
    </location>
</feature>
<feature type="short sequence motif" description="HXXXXD motif">
    <location>
        <begin position="205"/>
        <end position="210"/>
    </location>
</feature>
<feature type="modified residue" description="Phosphoserine" evidence="18">
    <location>
        <position position="662"/>
    </location>
</feature>
<feature type="modified residue" description="Phosphothreonine" evidence="18">
    <location>
        <position position="666"/>
    </location>
</feature>
<feature type="modified residue" description="Phosphoserine" evidence="18">
    <location>
        <position position="668"/>
    </location>
</feature>
<feature type="modified residue" description="Phosphoserine" evidence="18">
    <location>
        <position position="670"/>
    </location>
</feature>
<feature type="splice variant" id="VSP_032457" description="In isoform 2 and isoform 3." evidence="10 12">
    <location>
        <begin position="1"/>
        <end position="3"/>
    </location>
</feature>
<feature type="splice variant" id="VSP_032458" description="In isoform 2." evidence="10">
    <location>
        <position position="414"/>
    </location>
</feature>
<feature type="mutagenesis site" description="Does not affect ability to promote piRNA biosynthesis." evidence="8">
    <original>H</original>
    <variation>G</variation>
    <location>
        <position position="205"/>
    </location>
</feature>
<feature type="mutagenesis site" description="Does not affect ability to promote piRNA biosynthesis." evidence="8">
    <original>D</original>
    <variation>G</variation>
    <location>
        <position position="210"/>
    </location>
</feature>
<feature type="sequence conflict" description="In Ref. 5; AAI13166/AAI13777." evidence="13" ref="5">
    <original>G</original>
    <variation>S</variation>
    <location>
        <position position="150"/>
    </location>
</feature>
<feature type="sequence conflict" description="In Ref. 3; BAD21404." evidence="13" ref="3">
    <original>A</original>
    <variation>V</variation>
    <location>
        <position position="238"/>
    </location>
</feature>
<feature type="sequence conflict" description="In Ref. 5; AAI13166/AAI13777." evidence="13" ref="5">
    <original>R</original>
    <variation>H</variation>
    <location>
        <position position="272"/>
    </location>
</feature>
<feature type="sequence conflict" description="In Ref. 6; BAC30772." evidence="13" ref="6">
    <original>Q</original>
    <variation>E</variation>
    <location>
        <position position="482"/>
    </location>
</feature>
<gene>
    <name evidence="17" type="primary">Gpat2</name>
</gene>
<keyword id="KW-0012">Acyltransferase</keyword>
<keyword id="KW-0025">Alternative splicing</keyword>
<keyword id="KW-0444">Lipid biosynthesis</keyword>
<keyword id="KW-0443">Lipid metabolism</keyword>
<keyword id="KW-0472">Membrane</keyword>
<keyword id="KW-0496">Mitochondrion</keyword>
<keyword id="KW-1000">Mitochondrion outer membrane</keyword>
<keyword id="KW-0594">Phospholipid biosynthesis</keyword>
<keyword id="KW-1208">Phospholipid metabolism</keyword>
<keyword id="KW-0597">Phosphoprotein</keyword>
<keyword id="KW-1185">Reference proteome</keyword>
<keyword id="KW-0808">Transferase</keyword>
<keyword id="KW-0812">Transmembrane</keyword>
<keyword id="KW-1133">Transmembrane helix</keyword>
<proteinExistence type="evidence at protein level"/>
<sequence>MDTMLKSNPQTQQRSNHNGQETSLWSSSFGMKMEAITPFLGKYRPFMGRCCQTCTPKSWESLFHRSIMDLGFCNVILVKEENTRFRGWLVRRLCYFLWSLEQHIPTSFDASQKIMENTGVQNLLSGRVPGAAGEGQAPELVKKEVQRILGHIQTTPRPFLLRLFSWALLWFLNRLFLNVQLHKGQMKMVQKAVQEGSPLVFLSTHKSLLDGFLLPFVLFSQGLGVVRVALDSRTCSPALRALLRKLGGLFLPPEVNLSLDNSEGILARAVVRATVEELLTSGQPLLIFLEEPPGSPGPRLSALGQAWLGVVIQAVQAGIISDATLVPVAIAYDLVPDAPCNMNHDLAPLGLWTGALAVFRRLCNCWGCNRRVCVRVHLAQPFSLQEYTINARSCWDSRQTLEHLLQPIVLGECSVVPDTEKEQEWTPPTGLLLALKEEDQLLVRRLSRHVLSASVASSAVMSTAIMATLLLLKHQKGVVLSQLLGEFSWLTEETLLRGFDVGFSGQLRCLAQHTLSLLRAHVVLLRVHQGDLVVVPRPGPGLTHLARLSMELLPTFLSEAVGACAVRGLLAGRVPPEGPWELQGIELLSQNELYRQILLLLHLLPQDLLLPQPCQSSYCYCQEVLDRLIQCGLLVAEETPGSRPACDTGRQHLSAKLLWKPSGDFTDSESDDFEEPGGRCFRLSQQSRCPDFFLFLCRLLSPILKAFAQAATFLHLGQLPDSEVAYSEKLFQFLQACAQEEGIFECADPNLAISAVWTFKDLGVLQEMPSPTGPQLHLSPTFATRDNQDKLEQFIRQFICS</sequence>
<accession>Q14DK4</accession>
<accession>B1AW16</accession>
<accession>Q0KK60</accession>
<accession>Q14CH8</accession>
<accession>Q6KAQ3</accession>
<accession>Q8BRZ9</accession>
<name>GPAT2_MOUSE</name>
<protein>
    <recommendedName>
        <fullName evidence="13">Glycerol-3-phosphate acyltransferase 2, mitochondrial</fullName>
        <shortName>GPAT-2</shortName>
        <ecNumber evidence="7 14 15">2.3.1.15</ecNumber>
    </recommendedName>
    <alternativeName>
        <fullName evidence="13">1-acylglycerol-3-phosphate O-acyltransferase GPAT2</fullName>
        <ecNumber evidence="7">2.3.1.51</ecNumber>
    </alternativeName>
    <alternativeName>
        <fullName evidence="11">xGPAT1</fullName>
    </alternativeName>
</protein>
<dbReference type="EC" id="2.3.1.15" evidence="7 14 15"/>
<dbReference type="EC" id="2.3.1.51" evidence="7"/>
<dbReference type="EMBL" id="AB257502">
    <property type="protein sequence ID" value="BAF03614.1"/>
    <property type="molecule type" value="mRNA"/>
</dbReference>
<dbReference type="EMBL" id="AK131154">
    <property type="protein sequence ID" value="BAD21404.1"/>
    <property type="status" value="ALT_INIT"/>
    <property type="molecule type" value="mRNA"/>
</dbReference>
<dbReference type="EMBL" id="AL731831">
    <property type="status" value="NOT_ANNOTATED_CDS"/>
    <property type="molecule type" value="Genomic_DNA"/>
</dbReference>
<dbReference type="EMBL" id="AL731836">
    <property type="status" value="NOT_ANNOTATED_CDS"/>
    <property type="molecule type" value="Genomic_DNA"/>
</dbReference>
<dbReference type="EMBL" id="BC113776">
    <property type="protein sequence ID" value="AAI13777.1"/>
    <property type="status" value="ALT_INIT"/>
    <property type="molecule type" value="mRNA"/>
</dbReference>
<dbReference type="EMBL" id="BC113165">
    <property type="protein sequence ID" value="AAI13166.1"/>
    <property type="molecule type" value="mRNA"/>
</dbReference>
<dbReference type="EMBL" id="AK040991">
    <property type="protein sequence ID" value="BAC30772.1"/>
    <property type="molecule type" value="mRNA"/>
</dbReference>
<dbReference type="CCDS" id="CCDS38232.2">
    <molecule id="Q14DK4-1"/>
</dbReference>
<dbReference type="RefSeq" id="NP_001074558.2">
    <molecule id="Q14DK4-1"/>
    <property type="nucleotide sequence ID" value="NM_001081089.2"/>
</dbReference>
<dbReference type="RefSeq" id="XP_006499201.1">
    <molecule id="Q14DK4-1"/>
    <property type="nucleotide sequence ID" value="XM_006499138.4"/>
</dbReference>
<dbReference type="SMR" id="Q14DK4"/>
<dbReference type="BioGRID" id="229629">
    <property type="interactions" value="1"/>
</dbReference>
<dbReference type="FunCoup" id="Q14DK4">
    <property type="interactions" value="220"/>
</dbReference>
<dbReference type="STRING" id="10090.ENSMUSP00000049619"/>
<dbReference type="SwissLipids" id="SLP:000000102"/>
<dbReference type="iPTMnet" id="Q14DK4"/>
<dbReference type="PhosphoSitePlus" id="Q14DK4"/>
<dbReference type="SwissPalm" id="Q14DK4"/>
<dbReference type="PaxDb" id="10090-ENSMUSP00000049619"/>
<dbReference type="ProteomicsDB" id="271140">
    <molecule id="Q14DK4-1"/>
</dbReference>
<dbReference type="ProteomicsDB" id="271141">
    <molecule id="Q14DK4-2"/>
</dbReference>
<dbReference type="ProteomicsDB" id="271142">
    <molecule id="Q14DK4-3"/>
</dbReference>
<dbReference type="Antibodypedia" id="32374">
    <property type="antibodies" value="50 antibodies from 10 providers"/>
</dbReference>
<dbReference type="Ensembl" id="ENSMUST00000062211.4">
    <molecule id="Q14DK4-1"/>
    <property type="protein sequence ID" value="ENSMUSP00000049619.4"/>
    <property type="gene ID" value="ENSMUSG00000046338.5"/>
</dbReference>
<dbReference type="GeneID" id="215456"/>
<dbReference type="KEGG" id="mmu:215456"/>
<dbReference type="UCSC" id="uc008mfj.2">
    <molecule id="Q14DK4-1"/>
    <property type="organism name" value="mouse"/>
</dbReference>
<dbReference type="UCSC" id="uc012cdn.1">
    <molecule id="Q14DK4-2"/>
    <property type="organism name" value="mouse"/>
</dbReference>
<dbReference type="AGR" id="MGI:2684962"/>
<dbReference type="CTD" id="150763"/>
<dbReference type="MGI" id="MGI:2684962">
    <property type="gene designation" value="Gpat2"/>
</dbReference>
<dbReference type="VEuPathDB" id="HostDB:ENSMUSG00000046338"/>
<dbReference type="eggNOG" id="KOG3729">
    <property type="taxonomic scope" value="Eukaryota"/>
</dbReference>
<dbReference type="GeneTree" id="ENSGT00520000055570"/>
<dbReference type="HOGENOM" id="CLU_016910_0_0_1"/>
<dbReference type="InParanoid" id="Q14DK4"/>
<dbReference type="OMA" id="QEYTTNA"/>
<dbReference type="OrthoDB" id="5962536at2759"/>
<dbReference type="PhylomeDB" id="Q14DK4"/>
<dbReference type="TreeFam" id="TF313360"/>
<dbReference type="BRENDA" id="2.3.1.15">
    <property type="organism ID" value="3474"/>
</dbReference>
<dbReference type="Reactome" id="R-MMU-1483166">
    <property type="pathway name" value="Synthesis of PA"/>
</dbReference>
<dbReference type="Reactome" id="R-MMU-75109">
    <property type="pathway name" value="Triglyceride biosynthesis"/>
</dbReference>
<dbReference type="UniPathway" id="UPA00557">
    <property type="reaction ID" value="UER00612"/>
</dbReference>
<dbReference type="BioGRID-ORCS" id="215456">
    <property type="hits" value="2 hits in 76 CRISPR screens"/>
</dbReference>
<dbReference type="PRO" id="PR:Q14DK4"/>
<dbReference type="Proteomes" id="UP000000589">
    <property type="component" value="Chromosome 2"/>
</dbReference>
<dbReference type="RNAct" id="Q14DK4">
    <property type="molecule type" value="protein"/>
</dbReference>
<dbReference type="Bgee" id="ENSMUSG00000046338">
    <property type="expression patterns" value="Expressed in spermatocyte and 41 other cell types or tissues"/>
</dbReference>
<dbReference type="GO" id="GO:0005741">
    <property type="term" value="C:mitochondrial outer membrane"/>
    <property type="evidence" value="ECO:0000250"/>
    <property type="project" value="UniProtKB"/>
</dbReference>
<dbReference type="GO" id="GO:0005739">
    <property type="term" value="C:mitochondrion"/>
    <property type="evidence" value="ECO:0000314"/>
    <property type="project" value="MGI"/>
</dbReference>
<dbReference type="GO" id="GO:0003841">
    <property type="term" value="F:1-acylglycerol-3-phosphate O-acyltransferase activity"/>
    <property type="evidence" value="ECO:0000314"/>
    <property type="project" value="UniProtKB"/>
</dbReference>
<dbReference type="GO" id="GO:0004366">
    <property type="term" value="F:glycerol-3-phosphate O-acyltransferase activity"/>
    <property type="evidence" value="ECO:0000314"/>
    <property type="project" value="MGI"/>
</dbReference>
<dbReference type="GO" id="GO:0016024">
    <property type="term" value="P:CDP-diacylglycerol biosynthetic process"/>
    <property type="evidence" value="ECO:0007669"/>
    <property type="project" value="UniProtKB-UniPathway"/>
</dbReference>
<dbReference type="GO" id="GO:0006072">
    <property type="term" value="P:glycerol-3-phosphate metabolic process"/>
    <property type="evidence" value="ECO:0000314"/>
    <property type="project" value="MGI"/>
</dbReference>
<dbReference type="GO" id="GO:0006654">
    <property type="term" value="P:phosphatidic acid biosynthetic process"/>
    <property type="evidence" value="ECO:0000315"/>
    <property type="project" value="UniProtKB"/>
</dbReference>
<dbReference type="GO" id="GO:0034587">
    <property type="term" value="P:piRNA processing"/>
    <property type="evidence" value="ECO:0000315"/>
    <property type="project" value="UniProtKB"/>
</dbReference>
<dbReference type="GO" id="GO:0019432">
    <property type="term" value="P:triglyceride biosynthetic process"/>
    <property type="evidence" value="ECO:0000314"/>
    <property type="project" value="MGI"/>
</dbReference>
<dbReference type="CDD" id="cd07993">
    <property type="entry name" value="LPLAT_DHAPAT-like"/>
    <property type="match status" value="1"/>
</dbReference>
<dbReference type="InterPro" id="IPR022284">
    <property type="entry name" value="GPAT/DHAPAT"/>
</dbReference>
<dbReference type="InterPro" id="IPR045520">
    <property type="entry name" value="GPAT/DHAPAT_C"/>
</dbReference>
<dbReference type="InterPro" id="IPR041728">
    <property type="entry name" value="GPAT/DHAPAT_LPLAT"/>
</dbReference>
<dbReference type="InterPro" id="IPR002123">
    <property type="entry name" value="Plipid/glycerol_acylTrfase"/>
</dbReference>
<dbReference type="PANTHER" id="PTHR12563">
    <property type="entry name" value="GLYCEROL-3-PHOSPHATE ACYLTRANSFERASE"/>
    <property type="match status" value="1"/>
</dbReference>
<dbReference type="PANTHER" id="PTHR12563:SF15">
    <property type="entry name" value="GLYCEROL-3-PHOSPHATE ACYLTRANSFERASE 2, MITOCHONDRIAL"/>
    <property type="match status" value="1"/>
</dbReference>
<dbReference type="Pfam" id="PF01553">
    <property type="entry name" value="Acyltransferase"/>
    <property type="match status" value="1"/>
</dbReference>
<dbReference type="Pfam" id="PF19277">
    <property type="entry name" value="GPAT_C"/>
    <property type="match status" value="1"/>
</dbReference>
<dbReference type="SMART" id="SM00563">
    <property type="entry name" value="PlsC"/>
    <property type="match status" value="1"/>
</dbReference>
<dbReference type="SUPFAM" id="SSF69593">
    <property type="entry name" value="Glycerol-3-phosphate (1)-acyltransferase"/>
    <property type="match status" value="1"/>
</dbReference>